<evidence type="ECO:0000255" key="1">
    <source>
        <dbReference type="HAMAP-Rule" id="MF_00377"/>
    </source>
</evidence>
<evidence type="ECO:0000256" key="2">
    <source>
        <dbReference type="SAM" id="MobiDB-lite"/>
    </source>
</evidence>
<feature type="chain" id="PRO_1000048705" description="Chromosomal replication initiator protein DnaA">
    <location>
        <begin position="1"/>
        <end position="472"/>
    </location>
</feature>
<feature type="region of interest" description="Domain I, interacts with DnaA modulators" evidence="1">
    <location>
        <begin position="1"/>
        <end position="73"/>
    </location>
</feature>
<feature type="region of interest" description="Domain II" evidence="1">
    <location>
        <begin position="73"/>
        <end position="128"/>
    </location>
</feature>
<feature type="region of interest" description="Disordered" evidence="2">
    <location>
        <begin position="89"/>
        <end position="127"/>
    </location>
</feature>
<feature type="region of interest" description="Domain III, AAA+ region" evidence="1">
    <location>
        <begin position="129"/>
        <end position="351"/>
    </location>
</feature>
<feature type="region of interest" description="Domain IV, binds dsDNA" evidence="1">
    <location>
        <begin position="352"/>
        <end position="472"/>
    </location>
</feature>
<feature type="compositionally biased region" description="Basic and acidic residues" evidence="2">
    <location>
        <begin position="97"/>
        <end position="112"/>
    </location>
</feature>
<feature type="compositionally biased region" description="Low complexity" evidence="2">
    <location>
        <begin position="113"/>
        <end position="124"/>
    </location>
</feature>
<feature type="binding site" evidence="1">
    <location>
        <position position="176"/>
    </location>
    <ligand>
        <name>ATP</name>
        <dbReference type="ChEBI" id="CHEBI:30616"/>
    </ligand>
</feature>
<feature type="binding site" evidence="1">
    <location>
        <position position="178"/>
    </location>
    <ligand>
        <name>ATP</name>
        <dbReference type="ChEBI" id="CHEBI:30616"/>
    </ligand>
</feature>
<feature type="binding site" evidence="1">
    <location>
        <position position="179"/>
    </location>
    <ligand>
        <name>ATP</name>
        <dbReference type="ChEBI" id="CHEBI:30616"/>
    </ligand>
</feature>
<feature type="binding site" evidence="1">
    <location>
        <position position="180"/>
    </location>
    <ligand>
        <name>ATP</name>
        <dbReference type="ChEBI" id="CHEBI:30616"/>
    </ligand>
</feature>
<keyword id="KW-0067">ATP-binding</keyword>
<keyword id="KW-0963">Cytoplasm</keyword>
<keyword id="KW-0235">DNA replication</keyword>
<keyword id="KW-0238">DNA-binding</keyword>
<keyword id="KW-0446">Lipid-binding</keyword>
<keyword id="KW-0547">Nucleotide-binding</keyword>
<reference key="1">
    <citation type="submission" date="2006-03" db="EMBL/GenBank/DDBJ databases">
        <title>Complete sequence of Rhodopseudomonas palustris BisB5.</title>
        <authorList>
            <consortium name="US DOE Joint Genome Institute"/>
            <person name="Copeland A."/>
            <person name="Lucas S."/>
            <person name="Lapidus A."/>
            <person name="Barry K."/>
            <person name="Detter J.C."/>
            <person name="Glavina del Rio T."/>
            <person name="Hammon N."/>
            <person name="Israni S."/>
            <person name="Dalin E."/>
            <person name="Tice H."/>
            <person name="Pitluck S."/>
            <person name="Chain P."/>
            <person name="Malfatti S."/>
            <person name="Shin M."/>
            <person name="Vergez L."/>
            <person name="Schmutz J."/>
            <person name="Larimer F."/>
            <person name="Land M."/>
            <person name="Hauser L."/>
            <person name="Pelletier D.A."/>
            <person name="Kyrpides N."/>
            <person name="Lykidis A."/>
            <person name="Oda Y."/>
            <person name="Harwood C.S."/>
            <person name="Richardson P."/>
        </authorList>
    </citation>
    <scope>NUCLEOTIDE SEQUENCE [LARGE SCALE GENOMIC DNA]</scope>
    <source>
        <strain>BisB5</strain>
    </source>
</reference>
<comment type="function">
    <text evidence="1">Plays an essential role in the initiation and regulation of chromosomal replication. ATP-DnaA binds to the origin of replication (oriC) to initiate formation of the DNA replication initiation complex once per cell cycle. Binds the DnaA box (a 9 base pair repeat at the origin) and separates the double-stranded (ds)DNA. Forms a right-handed helical filament on oriC DNA; dsDNA binds to the exterior of the filament while single-stranded (ss)DNA is stabiized in the filament's interior. The ATP-DnaA-oriC complex binds and stabilizes one strand of the AT-rich DNA unwinding element (DUE), permitting loading of DNA polymerase. After initiation quickly degrades to an ADP-DnaA complex that is not apt for DNA replication. Binds acidic phospholipids.</text>
</comment>
<comment type="subunit">
    <text evidence="1">Oligomerizes as a right-handed, spiral filament on DNA at oriC.</text>
</comment>
<comment type="subcellular location">
    <subcellularLocation>
        <location evidence="1">Cytoplasm</location>
    </subcellularLocation>
</comment>
<comment type="domain">
    <text evidence="1">Domain I is involved in oligomerization and binding regulators, domain II is flexibile and of varying length in different bacteria, domain III forms the AAA+ region, while domain IV binds dsDNA.</text>
</comment>
<comment type="similarity">
    <text evidence="1">Belongs to the DnaA family.</text>
</comment>
<sequence>MSNMEHDRWSRVKGRLRSSVGEDVYSSWFARMDLEAVQQESVHLSVPTRFLKSWIQTHYSEKVLTCWQAEMPEVCRIDLTVRSPMRAAVTKEAPAPAEHRRDEHRPAADARSHAAAPAPSNHDALGGSPLDPRLTFASFVVGRSNTLAHAAAKQVAEGRRGDPVMFNPLYIHSGVGLGKTHLLQAVTWAGNSGTERKVLYLTAEKFMYGFVASLKTQTSLAFKEALRGIDVLVIDDLQFLQGKTTQAEFCHTLNALIDAGRQVVVAADRPPADLESLDERVRSRLAGGLVVEMAPLGEELRLGILKSRVVAARTHHASFDVPQSVLEYLARAITHNGRDLEGAINRLLAHSKLNAQPVTLEMAEHEVRDLIRPQEPKRIKIEDIQRVVARQYNVSRSDLLSSRRTANVVRPRQVAMYLAKTLTLRSLPEIGRRFGGRDHTTVLHAVRKIEGLVSKDVTLSDEVESLKRQLQE</sequence>
<organism>
    <name type="scientific">Rhodopseudomonas palustris (strain BisB5)</name>
    <dbReference type="NCBI Taxonomy" id="316057"/>
    <lineage>
        <taxon>Bacteria</taxon>
        <taxon>Pseudomonadati</taxon>
        <taxon>Pseudomonadota</taxon>
        <taxon>Alphaproteobacteria</taxon>
        <taxon>Hyphomicrobiales</taxon>
        <taxon>Nitrobacteraceae</taxon>
        <taxon>Rhodopseudomonas</taxon>
    </lineage>
</organism>
<name>DNAA_RHOPS</name>
<proteinExistence type="inferred from homology"/>
<accession>Q13F98</accession>
<protein>
    <recommendedName>
        <fullName evidence="1">Chromosomal replication initiator protein DnaA</fullName>
    </recommendedName>
</protein>
<gene>
    <name evidence="1" type="primary">dnaA</name>
    <name type="ordered locus">RPD_0001</name>
</gene>
<dbReference type="EMBL" id="CP000283">
    <property type="protein sequence ID" value="ABE37241.1"/>
    <property type="molecule type" value="Genomic_DNA"/>
</dbReference>
<dbReference type="SMR" id="Q13F98"/>
<dbReference type="STRING" id="316057.RPD_0001"/>
<dbReference type="KEGG" id="rpd:RPD_0001"/>
<dbReference type="eggNOG" id="COG0593">
    <property type="taxonomic scope" value="Bacteria"/>
</dbReference>
<dbReference type="HOGENOM" id="CLU_026910_3_0_5"/>
<dbReference type="BioCyc" id="RPAL316057:RPD_RS00005-MONOMER"/>
<dbReference type="Proteomes" id="UP000001818">
    <property type="component" value="Chromosome"/>
</dbReference>
<dbReference type="GO" id="GO:0005737">
    <property type="term" value="C:cytoplasm"/>
    <property type="evidence" value="ECO:0007669"/>
    <property type="project" value="UniProtKB-SubCell"/>
</dbReference>
<dbReference type="GO" id="GO:0005886">
    <property type="term" value="C:plasma membrane"/>
    <property type="evidence" value="ECO:0007669"/>
    <property type="project" value="TreeGrafter"/>
</dbReference>
<dbReference type="GO" id="GO:0005524">
    <property type="term" value="F:ATP binding"/>
    <property type="evidence" value="ECO:0007669"/>
    <property type="project" value="UniProtKB-UniRule"/>
</dbReference>
<dbReference type="GO" id="GO:0016887">
    <property type="term" value="F:ATP hydrolysis activity"/>
    <property type="evidence" value="ECO:0007669"/>
    <property type="project" value="InterPro"/>
</dbReference>
<dbReference type="GO" id="GO:0003688">
    <property type="term" value="F:DNA replication origin binding"/>
    <property type="evidence" value="ECO:0007669"/>
    <property type="project" value="UniProtKB-UniRule"/>
</dbReference>
<dbReference type="GO" id="GO:0008289">
    <property type="term" value="F:lipid binding"/>
    <property type="evidence" value="ECO:0007669"/>
    <property type="project" value="UniProtKB-KW"/>
</dbReference>
<dbReference type="GO" id="GO:0006270">
    <property type="term" value="P:DNA replication initiation"/>
    <property type="evidence" value="ECO:0007669"/>
    <property type="project" value="UniProtKB-UniRule"/>
</dbReference>
<dbReference type="GO" id="GO:0006275">
    <property type="term" value="P:regulation of DNA replication"/>
    <property type="evidence" value="ECO:0007669"/>
    <property type="project" value="UniProtKB-UniRule"/>
</dbReference>
<dbReference type="CDD" id="cd00009">
    <property type="entry name" value="AAA"/>
    <property type="match status" value="1"/>
</dbReference>
<dbReference type="CDD" id="cd06571">
    <property type="entry name" value="Bac_DnaA_C"/>
    <property type="match status" value="1"/>
</dbReference>
<dbReference type="FunFam" id="1.10.1750.10:FF:000002">
    <property type="entry name" value="Chromosomal replication initiator protein DnaA"/>
    <property type="match status" value="1"/>
</dbReference>
<dbReference type="FunFam" id="3.40.50.300:FF:000668">
    <property type="entry name" value="Chromosomal replication initiator protein DnaA"/>
    <property type="match status" value="1"/>
</dbReference>
<dbReference type="Gene3D" id="1.10.1750.10">
    <property type="match status" value="1"/>
</dbReference>
<dbReference type="Gene3D" id="1.10.8.60">
    <property type="match status" value="1"/>
</dbReference>
<dbReference type="Gene3D" id="3.30.300.180">
    <property type="match status" value="1"/>
</dbReference>
<dbReference type="Gene3D" id="3.40.50.300">
    <property type="entry name" value="P-loop containing nucleotide triphosphate hydrolases"/>
    <property type="match status" value="1"/>
</dbReference>
<dbReference type="HAMAP" id="MF_00377">
    <property type="entry name" value="DnaA_bact"/>
    <property type="match status" value="1"/>
</dbReference>
<dbReference type="InterPro" id="IPR003593">
    <property type="entry name" value="AAA+_ATPase"/>
</dbReference>
<dbReference type="InterPro" id="IPR001957">
    <property type="entry name" value="Chromosome_initiator_DnaA"/>
</dbReference>
<dbReference type="InterPro" id="IPR020591">
    <property type="entry name" value="Chromosome_initiator_DnaA-like"/>
</dbReference>
<dbReference type="InterPro" id="IPR018312">
    <property type="entry name" value="Chromosome_initiator_DnaA_CS"/>
</dbReference>
<dbReference type="InterPro" id="IPR013159">
    <property type="entry name" value="DnaA_C"/>
</dbReference>
<dbReference type="InterPro" id="IPR013317">
    <property type="entry name" value="DnaA_dom"/>
</dbReference>
<dbReference type="InterPro" id="IPR024633">
    <property type="entry name" value="DnaA_N_dom"/>
</dbReference>
<dbReference type="InterPro" id="IPR038454">
    <property type="entry name" value="DnaA_N_sf"/>
</dbReference>
<dbReference type="InterPro" id="IPR027417">
    <property type="entry name" value="P-loop_NTPase"/>
</dbReference>
<dbReference type="InterPro" id="IPR010921">
    <property type="entry name" value="Trp_repressor/repl_initiator"/>
</dbReference>
<dbReference type="NCBIfam" id="TIGR00362">
    <property type="entry name" value="DnaA"/>
    <property type="match status" value="1"/>
</dbReference>
<dbReference type="PANTHER" id="PTHR30050">
    <property type="entry name" value="CHROMOSOMAL REPLICATION INITIATOR PROTEIN DNAA"/>
    <property type="match status" value="1"/>
</dbReference>
<dbReference type="PANTHER" id="PTHR30050:SF2">
    <property type="entry name" value="CHROMOSOMAL REPLICATION INITIATOR PROTEIN DNAA"/>
    <property type="match status" value="1"/>
</dbReference>
<dbReference type="Pfam" id="PF00308">
    <property type="entry name" value="Bac_DnaA"/>
    <property type="match status" value="1"/>
</dbReference>
<dbReference type="Pfam" id="PF08299">
    <property type="entry name" value="Bac_DnaA_C"/>
    <property type="match status" value="1"/>
</dbReference>
<dbReference type="Pfam" id="PF11638">
    <property type="entry name" value="DnaA_N"/>
    <property type="match status" value="1"/>
</dbReference>
<dbReference type="PRINTS" id="PR00051">
    <property type="entry name" value="DNAA"/>
</dbReference>
<dbReference type="SMART" id="SM00382">
    <property type="entry name" value="AAA"/>
    <property type="match status" value="1"/>
</dbReference>
<dbReference type="SMART" id="SM00760">
    <property type="entry name" value="Bac_DnaA_C"/>
    <property type="match status" value="1"/>
</dbReference>
<dbReference type="SUPFAM" id="SSF52540">
    <property type="entry name" value="P-loop containing nucleoside triphosphate hydrolases"/>
    <property type="match status" value="1"/>
</dbReference>
<dbReference type="SUPFAM" id="SSF48295">
    <property type="entry name" value="TrpR-like"/>
    <property type="match status" value="1"/>
</dbReference>
<dbReference type="PROSITE" id="PS01008">
    <property type="entry name" value="DNAA"/>
    <property type="match status" value="1"/>
</dbReference>